<accession>O57742</accession>
<dbReference type="EC" id="5.4.2.12"/>
<dbReference type="EMBL" id="BA000001">
    <property type="protein sequence ID" value="BAA29105.1"/>
    <property type="molecule type" value="Genomic_DNA"/>
</dbReference>
<dbReference type="PIR" id="B71222">
    <property type="entry name" value="B71222"/>
</dbReference>
<dbReference type="RefSeq" id="WP_010884156.1">
    <property type="nucleotide sequence ID" value="NC_000961.1"/>
</dbReference>
<dbReference type="PDB" id="2ZKT">
    <property type="method" value="X-ray"/>
    <property type="resolution" value="2.40 A"/>
    <property type="chains" value="A/B=1-412"/>
</dbReference>
<dbReference type="PDBsum" id="2ZKT"/>
<dbReference type="SMR" id="O57742"/>
<dbReference type="STRING" id="70601.gene:9376944"/>
<dbReference type="EnsemblBacteria" id="BAA29105">
    <property type="protein sequence ID" value="BAA29105"/>
    <property type="gene ID" value="BAA29105"/>
</dbReference>
<dbReference type="GeneID" id="1443938"/>
<dbReference type="KEGG" id="pho:PH0037"/>
<dbReference type="eggNOG" id="arCOG01696">
    <property type="taxonomic scope" value="Archaea"/>
</dbReference>
<dbReference type="OrthoDB" id="52918at2157"/>
<dbReference type="UniPathway" id="UPA00109">
    <property type="reaction ID" value="UER00186"/>
</dbReference>
<dbReference type="EvolutionaryTrace" id="O57742"/>
<dbReference type="Proteomes" id="UP000000752">
    <property type="component" value="Chromosome"/>
</dbReference>
<dbReference type="GO" id="GO:0046872">
    <property type="term" value="F:metal ion binding"/>
    <property type="evidence" value="ECO:0007669"/>
    <property type="project" value="InterPro"/>
</dbReference>
<dbReference type="GO" id="GO:0004619">
    <property type="term" value="F:phosphoglycerate mutase activity"/>
    <property type="evidence" value="ECO:0007669"/>
    <property type="project" value="UniProtKB-EC"/>
</dbReference>
<dbReference type="GO" id="GO:0006096">
    <property type="term" value="P:glycolytic process"/>
    <property type="evidence" value="ECO:0007669"/>
    <property type="project" value="UniProtKB-UniRule"/>
</dbReference>
<dbReference type="CDD" id="cd16011">
    <property type="entry name" value="iPGM_like"/>
    <property type="match status" value="1"/>
</dbReference>
<dbReference type="Gene3D" id="3.40.720.10">
    <property type="entry name" value="Alkaline Phosphatase, subunit A"/>
    <property type="match status" value="1"/>
</dbReference>
<dbReference type="Gene3D" id="3.30.70.2130">
    <property type="entry name" value="Metalloenzyme domain"/>
    <property type="match status" value="1"/>
</dbReference>
<dbReference type="HAMAP" id="MF_01402_A">
    <property type="entry name" value="ApgM_A"/>
    <property type="match status" value="1"/>
</dbReference>
<dbReference type="InterPro" id="IPR017850">
    <property type="entry name" value="Alkaline_phosphatase_core_sf"/>
</dbReference>
<dbReference type="InterPro" id="IPR023665">
    <property type="entry name" value="ApgAM_prokaryotes"/>
</dbReference>
<dbReference type="InterPro" id="IPR006124">
    <property type="entry name" value="Metalloenzyme"/>
</dbReference>
<dbReference type="InterPro" id="IPR004456">
    <property type="entry name" value="Pglycerate_mutase_ApgM"/>
</dbReference>
<dbReference type="InterPro" id="IPR042253">
    <property type="entry name" value="Pglycerate_mutase_ApgM_sf"/>
</dbReference>
<dbReference type="NCBIfam" id="TIGR00306">
    <property type="entry name" value="apgM"/>
    <property type="match status" value="1"/>
</dbReference>
<dbReference type="NCBIfam" id="NF003104">
    <property type="entry name" value="PRK04024.1"/>
    <property type="match status" value="1"/>
</dbReference>
<dbReference type="PANTHER" id="PTHR31209">
    <property type="entry name" value="COFACTOR-INDEPENDENT PHOSPHOGLYCERATE MUTASE"/>
    <property type="match status" value="1"/>
</dbReference>
<dbReference type="PANTHER" id="PTHR31209:SF0">
    <property type="entry name" value="METALLOENZYME DOMAIN-CONTAINING PROTEIN"/>
    <property type="match status" value="1"/>
</dbReference>
<dbReference type="Pfam" id="PF01676">
    <property type="entry name" value="Metalloenzyme"/>
    <property type="match status" value="1"/>
</dbReference>
<dbReference type="Pfam" id="PF10143">
    <property type="entry name" value="PhosphMutase"/>
    <property type="match status" value="1"/>
</dbReference>
<dbReference type="PIRSF" id="PIRSF006392">
    <property type="entry name" value="IPGAM_arch"/>
    <property type="match status" value="1"/>
</dbReference>
<dbReference type="SUPFAM" id="SSF53649">
    <property type="entry name" value="Alkaline phosphatase-like"/>
    <property type="match status" value="1"/>
</dbReference>
<keyword id="KW-0002">3D-structure</keyword>
<keyword id="KW-0324">Glycolysis</keyword>
<keyword id="KW-0413">Isomerase</keyword>
<protein>
    <recommendedName>
        <fullName>2,3-bisphosphoglycerate-independent phosphoglycerate mutase</fullName>
        <shortName>BPG-independent PGAM</shortName>
        <shortName>Phosphoglyceromutase</shortName>
        <shortName>aPGAM</shortName>
        <ecNumber>5.4.2.12</ecNumber>
    </recommendedName>
</protein>
<organism>
    <name type="scientific">Pyrococcus horikoshii (strain ATCC 700860 / DSM 12428 / JCM 9974 / NBRC 100139 / OT-3)</name>
    <dbReference type="NCBI Taxonomy" id="70601"/>
    <lineage>
        <taxon>Archaea</taxon>
        <taxon>Methanobacteriati</taxon>
        <taxon>Methanobacteriota</taxon>
        <taxon>Thermococci</taxon>
        <taxon>Thermococcales</taxon>
        <taxon>Thermococcaceae</taxon>
        <taxon>Pyrococcus</taxon>
    </lineage>
</organism>
<proteinExistence type="evidence at protein level"/>
<gene>
    <name type="primary">apgM</name>
    <name type="ordered locus">PH0037</name>
</gene>
<evidence type="ECO:0000250" key="1"/>
<evidence type="ECO:0000305" key="2"/>
<evidence type="ECO:0007829" key="3">
    <source>
        <dbReference type="PDB" id="2ZKT"/>
    </source>
</evidence>
<comment type="function">
    <text evidence="1">Catalyzes the interconversion of 2-phosphoglycerate and 3-phosphoglycerate.</text>
</comment>
<comment type="catalytic activity">
    <reaction>
        <text>(2R)-2-phosphoglycerate = (2R)-3-phosphoglycerate</text>
        <dbReference type="Rhea" id="RHEA:15901"/>
        <dbReference type="ChEBI" id="CHEBI:58272"/>
        <dbReference type="ChEBI" id="CHEBI:58289"/>
        <dbReference type="EC" id="5.4.2.12"/>
    </reaction>
</comment>
<comment type="pathway">
    <text>Carbohydrate degradation; glycolysis; pyruvate from D-glyceraldehyde 3-phosphate: step 3/5.</text>
</comment>
<comment type="similarity">
    <text evidence="2">Belongs to the BPG-independent phosphoglycerate mutase family. A-PGAM subfamily.</text>
</comment>
<reference key="1">
    <citation type="journal article" date="1998" name="DNA Res.">
        <title>Complete sequence and gene organization of the genome of a hyper-thermophilic archaebacterium, Pyrococcus horikoshii OT3.</title>
        <authorList>
            <person name="Kawarabayasi Y."/>
            <person name="Sawada M."/>
            <person name="Horikawa H."/>
            <person name="Haikawa Y."/>
            <person name="Hino Y."/>
            <person name="Yamamoto S."/>
            <person name="Sekine M."/>
            <person name="Baba S."/>
            <person name="Kosugi H."/>
            <person name="Hosoyama A."/>
            <person name="Nagai Y."/>
            <person name="Sakai M."/>
            <person name="Ogura K."/>
            <person name="Otsuka R."/>
            <person name="Nakazawa H."/>
            <person name="Takamiya M."/>
            <person name="Ohfuku Y."/>
            <person name="Funahashi T."/>
            <person name="Tanaka T."/>
            <person name="Kudoh Y."/>
            <person name="Yamazaki J."/>
            <person name="Kushida N."/>
            <person name="Oguchi A."/>
            <person name="Aoki K."/>
            <person name="Yoshizawa T."/>
            <person name="Nakamura Y."/>
            <person name="Robb F.T."/>
            <person name="Horikoshi K."/>
            <person name="Masuchi Y."/>
            <person name="Shizuya H."/>
            <person name="Kikuchi H."/>
        </authorList>
    </citation>
    <scope>NUCLEOTIDE SEQUENCE [LARGE SCALE GENOMIC DNA]</scope>
    <source>
        <strain>ATCC 700860 / DSM 12428 / JCM 9974 / NBRC 100139 / OT-3</strain>
    </source>
</reference>
<sequence>MVLKRKGLLIILDGLGDRPIKELNGLTPLEYANTPNMDKLAEIGILGQQDPIKPGQPAGSDTAHLSIFGYDPYETYRGRGFFEALGVGLDLSKDDLAFRVNFATLENGIITDRRAGRISTEEAHELARAIQEEVDIGVDFIFKGATGHRAVLVLKGMSRGYKVGDNDPHEAGKPPLKFSYEDEDSKKVAEILEEFVKKAQEVLEKHPINERRRKEGKPIANYLLIRGAGTYPNIPMKFTEQWKVKAAGVIAVALVKGVARAVGFDVYTPEGATGEYNTNEMAKAKKAVELLKDYDFVFLHFKPTDAAGHDNKPKLKAELIERADRMIGYILDHVDLEEVVIAITGDHSTPCEVMNHSGDPVPLLIAGGGVRTDDTKRFGEREAMKGGLGRIRGHDIVPIMMDLMNRSEKFGA</sequence>
<name>APGM_PYRHO</name>
<feature type="chain" id="PRO_0000138145" description="2,3-bisphosphoglycerate-independent phosphoglycerate mutase">
    <location>
        <begin position="1"/>
        <end position="412"/>
    </location>
</feature>
<feature type="strand" evidence="3">
    <location>
        <begin position="6"/>
        <end position="12"/>
    </location>
</feature>
<feature type="helix" evidence="3">
    <location>
        <begin position="21"/>
        <end position="23"/>
    </location>
</feature>
<feature type="helix" evidence="3">
    <location>
        <begin position="28"/>
        <end position="31"/>
    </location>
</feature>
<feature type="helix" evidence="3">
    <location>
        <begin position="35"/>
        <end position="43"/>
    </location>
</feature>
<feature type="strand" evidence="3">
    <location>
        <begin position="44"/>
        <end position="53"/>
    </location>
</feature>
<feature type="helix" evidence="3">
    <location>
        <begin position="60"/>
        <end position="67"/>
    </location>
</feature>
<feature type="helix" evidence="3">
    <location>
        <begin position="72"/>
        <end position="75"/>
    </location>
</feature>
<feature type="helix" evidence="3">
    <location>
        <begin position="79"/>
        <end position="86"/>
    </location>
</feature>
<feature type="strand" evidence="3">
    <location>
        <begin position="96"/>
        <end position="100"/>
    </location>
</feature>
<feature type="strand" evidence="3">
    <location>
        <begin position="122"/>
        <end position="124"/>
    </location>
</feature>
<feature type="helix" evidence="3">
    <location>
        <begin position="131"/>
        <end position="143"/>
    </location>
</feature>
<feature type="strand" evidence="3">
    <location>
        <begin position="153"/>
        <end position="155"/>
    </location>
</feature>
<feature type="strand" evidence="3">
    <location>
        <begin position="163"/>
        <end position="166"/>
    </location>
</feature>
<feature type="helix" evidence="3">
    <location>
        <begin position="170"/>
        <end position="172"/>
    </location>
</feature>
<feature type="helix" evidence="3">
    <location>
        <begin position="186"/>
        <end position="203"/>
    </location>
</feature>
<feature type="helix" evidence="3">
    <location>
        <begin position="207"/>
        <end position="214"/>
    </location>
</feature>
<feature type="strand" evidence="3">
    <location>
        <begin position="225"/>
        <end position="229"/>
    </location>
</feature>
<feature type="helix" evidence="3">
    <location>
        <begin position="238"/>
        <end position="242"/>
    </location>
</feature>
<feature type="strand" evidence="3">
    <location>
        <begin position="246"/>
        <end position="249"/>
    </location>
</feature>
<feature type="helix" evidence="3">
    <location>
        <begin position="253"/>
        <end position="261"/>
    </location>
</feature>
<feature type="strand" evidence="3">
    <location>
        <begin position="265"/>
        <end position="267"/>
    </location>
</feature>
<feature type="helix" evidence="3">
    <location>
        <begin position="280"/>
        <end position="293"/>
    </location>
</feature>
<feature type="strand" evidence="3">
    <location>
        <begin position="295"/>
        <end position="301"/>
    </location>
</feature>
<feature type="helix" evidence="3">
    <location>
        <begin position="303"/>
        <end position="309"/>
    </location>
</feature>
<feature type="helix" evidence="3">
    <location>
        <begin position="313"/>
        <end position="331"/>
    </location>
</feature>
<feature type="turn" evidence="3">
    <location>
        <begin position="336"/>
        <end position="338"/>
    </location>
</feature>
<feature type="strand" evidence="3">
    <location>
        <begin position="339"/>
        <end position="344"/>
    </location>
</feature>
<feature type="strand" evidence="3">
    <location>
        <begin position="346"/>
        <end position="348"/>
    </location>
</feature>
<feature type="turn" evidence="3">
    <location>
        <begin position="351"/>
        <end position="353"/>
    </location>
</feature>
<feature type="strand" evidence="3">
    <location>
        <begin position="361"/>
        <end position="367"/>
    </location>
</feature>
<feature type="helix" evidence="3">
    <location>
        <begin position="380"/>
        <end position="383"/>
    </location>
</feature>
<feature type="strand" evidence="3">
    <location>
        <begin position="389"/>
        <end position="392"/>
    </location>
</feature>
<feature type="helix" evidence="3">
    <location>
        <begin position="393"/>
        <end position="395"/>
    </location>
</feature>
<feature type="helix" evidence="3">
    <location>
        <begin position="396"/>
        <end position="403"/>
    </location>
</feature>